<feature type="chain" id="PRO_0000317779" description="Capsid protein">
    <location>
        <begin position="1"/>
        <end position="501"/>
    </location>
</feature>
<feature type="zinc finger region" description="CCHC-type" evidence="2">
    <location>
        <begin position="431"/>
        <end position="448"/>
    </location>
</feature>
<feature type="region of interest" description="Disordered" evidence="3">
    <location>
        <begin position="78"/>
        <end position="98"/>
    </location>
</feature>
<feature type="short sequence motif" description="Nuclear localization signal" evidence="1">
    <location>
        <begin position="122"/>
        <end position="125"/>
    </location>
</feature>
<organismHost>
    <name type="scientific">Cestrum parqui</name>
    <dbReference type="NCBI Taxonomy" id="142762"/>
</organismHost>
<name>CAPSD_CYLCV</name>
<accession>Q7TD09</accession>
<dbReference type="EMBL" id="AF364175">
    <property type="protein sequence ID" value="AAP78923.1"/>
    <property type="molecule type" value="Genomic_DNA"/>
</dbReference>
<dbReference type="RefSeq" id="NP_861409.1">
    <property type="nucleotide sequence ID" value="NC_004324.3"/>
</dbReference>
<dbReference type="KEGG" id="vg:1732956"/>
<dbReference type="OrthoDB" id="22794at10239"/>
<dbReference type="Proteomes" id="UP000007763">
    <property type="component" value="Genome"/>
</dbReference>
<dbReference type="GO" id="GO:0043657">
    <property type="term" value="C:host cell"/>
    <property type="evidence" value="ECO:0007669"/>
    <property type="project" value="GOC"/>
</dbReference>
<dbReference type="GO" id="GO:0042025">
    <property type="term" value="C:host cell nucleus"/>
    <property type="evidence" value="ECO:0007669"/>
    <property type="project" value="UniProtKB-SubCell"/>
</dbReference>
<dbReference type="GO" id="GO:0039620">
    <property type="term" value="C:T=7 icosahedral viral capsid"/>
    <property type="evidence" value="ECO:0007669"/>
    <property type="project" value="UniProtKB-KW"/>
</dbReference>
<dbReference type="GO" id="GO:0003676">
    <property type="term" value="F:nucleic acid binding"/>
    <property type="evidence" value="ECO:0007669"/>
    <property type="project" value="InterPro"/>
</dbReference>
<dbReference type="GO" id="GO:0005198">
    <property type="term" value="F:structural molecule activity"/>
    <property type="evidence" value="ECO:0007669"/>
    <property type="project" value="InterPro"/>
</dbReference>
<dbReference type="GO" id="GO:0008270">
    <property type="term" value="F:zinc ion binding"/>
    <property type="evidence" value="ECO:0007669"/>
    <property type="project" value="UniProtKB-KW"/>
</dbReference>
<dbReference type="GO" id="GO:0046718">
    <property type="term" value="P:symbiont entry into host cell"/>
    <property type="evidence" value="ECO:0007669"/>
    <property type="project" value="UniProtKB-KW"/>
</dbReference>
<dbReference type="GO" id="GO:0075732">
    <property type="term" value="P:viral penetration into host nucleus"/>
    <property type="evidence" value="ECO:0007669"/>
    <property type="project" value="UniProtKB-KW"/>
</dbReference>
<dbReference type="InterPro" id="IPR001988">
    <property type="entry name" value="Caulimo_coat"/>
</dbReference>
<dbReference type="InterPro" id="IPR001878">
    <property type="entry name" value="Znf_CCHC"/>
</dbReference>
<dbReference type="InterPro" id="IPR036875">
    <property type="entry name" value="Znf_CCHC_sf"/>
</dbReference>
<dbReference type="Pfam" id="PF22909">
    <property type="entry name" value="Caulimovir_coat_dom"/>
    <property type="match status" value="1"/>
</dbReference>
<dbReference type="PRINTS" id="PR00221">
    <property type="entry name" value="CAULIMOCOAT"/>
</dbReference>
<dbReference type="SMART" id="SM00343">
    <property type="entry name" value="ZnF_C2HC"/>
    <property type="match status" value="1"/>
</dbReference>
<dbReference type="SUPFAM" id="SSF57756">
    <property type="entry name" value="Retrovirus zinc finger-like domains"/>
    <property type="match status" value="1"/>
</dbReference>
<dbReference type="PROSITE" id="PS50158">
    <property type="entry name" value="ZF_CCHC"/>
    <property type="match status" value="1"/>
</dbReference>
<sequence length="501" mass="59004">MSNNRRNVRTPTKFDKNTKTIQIFGKTSIVLKNMSIQERIDEVTQLLKQLKMIRDEETNTQKALIMEHEEVVYNYESSEEGFPVEPKTEEKDIPSTSGQKRTYEFMKDDFWNSGEFDKYAEKRGFIKKDGGGYSKIPKEYKPIHQDENSSILNLDCIDNAPALFVSWTSKHGLELQLNKHFENFSDNEIWNYTQYYTRGSVQKFLSEQDYQTDVAPNLALVQGGPYAKFKYIVQTIYGEFIGKDIRDHSQDLINQEAEKARFHLANMIICDLCYFDNYTCEYRKYFYMLTPDERSTYIELFLQKLPAPFGRKMMEGFRKETAENKIANTLGGAIDIVRRTIDEECIQRSYRRTIGGAVKICCKGNPEIPQRYGCYDITKRKKTSKKKWKKRSYKPDLWKKKKRFFKRRDFSKKKKENPGKKKFCPTGKKSCKCWICHEEGHYANECPKKTKEKHKDKVKLLMEAEEEGFEPLESEASDIEEIFEIVEEDSESSSEEDEEQR</sequence>
<comment type="function">
    <text evidence="1">Self assembles to form an icosahedral capsid, about 50 nm in diameter, nm, composed of 420 subunits of the viral capsid protein. The capsid encapsulates the genomic dsDNA. Following virus entry into host cell, provides nuclear import of the viral genome. Virus particles do not enter the nucleus, but dock at the nuclear membrane through the interaction with host importins (By similarity).</text>
</comment>
<comment type="subunit">
    <text evidence="1">Interacts (via nuclear localization signal) with host importin alpha.</text>
</comment>
<comment type="subcellular location">
    <subcellularLocation>
        <location evidence="4">Virion</location>
    </subcellularLocation>
    <subcellularLocation>
        <location evidence="4">Host nucleus</location>
    </subcellularLocation>
</comment>
<comment type="similarity">
    <text evidence="4">Belongs to the caulimoviridae capsid protein family.</text>
</comment>
<organism>
    <name type="scientific">Cestrum yellow leaf curling virus</name>
    <name type="common">CmYLCV</name>
    <dbReference type="NCBI Taxonomy" id="175814"/>
    <lineage>
        <taxon>Viruses</taxon>
        <taxon>Riboviria</taxon>
        <taxon>Pararnavirae</taxon>
        <taxon>Artverviricota</taxon>
        <taxon>Revtraviricetes</taxon>
        <taxon>Ortervirales</taxon>
        <taxon>Caulimoviridae</taxon>
        <taxon>Soymovirus</taxon>
        <taxon>Soymovirus crispocestri</taxon>
    </lineage>
</organism>
<reference key="1">
    <citation type="journal article" date="2003" name="J. Gen. Virol.">
        <title>Characterization of Cestrum yellow leaf curling virus: a new member of the family Caulimoviridae.</title>
        <authorList>
            <person name="Stavolone L."/>
            <person name="Ragozzino A."/>
            <person name="Hohn T."/>
        </authorList>
    </citation>
    <scope>NUCLEOTIDE SEQUENCE [GENOMIC DNA]</scope>
</reference>
<proteinExistence type="inferred from homology"/>
<protein>
    <recommendedName>
        <fullName>Capsid protein</fullName>
        <shortName>CP</shortName>
    </recommendedName>
    <alternativeName>
        <fullName>coat protein</fullName>
    </alternativeName>
</protein>
<gene>
    <name type="ORF">ORF IV</name>
</gene>
<evidence type="ECO:0000250" key="1"/>
<evidence type="ECO:0000255" key="2">
    <source>
        <dbReference type="PROSITE-ProRule" id="PRU00047"/>
    </source>
</evidence>
<evidence type="ECO:0000256" key="3">
    <source>
        <dbReference type="SAM" id="MobiDB-lite"/>
    </source>
</evidence>
<evidence type="ECO:0000305" key="4"/>
<keyword id="KW-0167">Capsid protein</keyword>
<keyword id="KW-1048">Host nucleus</keyword>
<keyword id="KW-0479">Metal-binding</keyword>
<keyword id="KW-1185">Reference proteome</keyword>
<keyword id="KW-1145">T=7 icosahedral capsid protein</keyword>
<keyword id="KW-1163">Viral penetration into host nucleus</keyword>
<keyword id="KW-0946">Virion</keyword>
<keyword id="KW-1160">Virus entry into host cell</keyword>
<keyword id="KW-0862">Zinc</keyword>
<keyword id="KW-0863">Zinc-finger</keyword>